<feature type="chain" id="PRO_1000025688" description="Cell division protein FtsB">
    <location>
        <begin position="1"/>
        <end position="91"/>
    </location>
</feature>
<feature type="topological domain" description="Cytoplasmic" evidence="1">
    <location>
        <begin position="1"/>
        <end position="3"/>
    </location>
</feature>
<feature type="transmembrane region" description="Helical" evidence="1">
    <location>
        <begin position="4"/>
        <end position="21"/>
    </location>
</feature>
<feature type="topological domain" description="Periplasmic" evidence="1">
    <location>
        <begin position="22"/>
        <end position="91"/>
    </location>
</feature>
<feature type="coiled-coil region" evidence="1">
    <location>
        <begin position="28"/>
        <end position="74"/>
    </location>
</feature>
<keyword id="KW-0131">Cell cycle</keyword>
<keyword id="KW-0132">Cell division</keyword>
<keyword id="KW-0997">Cell inner membrane</keyword>
<keyword id="KW-1003">Cell membrane</keyword>
<keyword id="KW-0175">Coiled coil</keyword>
<keyword id="KW-0472">Membrane</keyword>
<keyword id="KW-1185">Reference proteome</keyword>
<keyword id="KW-0812">Transmembrane</keyword>
<keyword id="KW-1133">Transmembrane helix</keyword>
<reference key="1">
    <citation type="journal article" date="2005" name="Arch. Microbiol.">
        <title>The genome sequence of an anaerobic aromatic-degrading denitrifying bacterium, strain EbN1.</title>
        <authorList>
            <person name="Rabus R."/>
            <person name="Kube M."/>
            <person name="Heider J."/>
            <person name="Beck A."/>
            <person name="Heitmann K."/>
            <person name="Widdel F."/>
            <person name="Reinhardt R."/>
        </authorList>
    </citation>
    <scope>NUCLEOTIDE SEQUENCE [LARGE SCALE GENOMIC DNA]</scope>
    <source>
        <strain>DSM 19018 / LMG 30748 / EbN1</strain>
    </source>
</reference>
<sequence>MRWPLIVLAVLVIVLQYPLWLGKGGWLRVWDVDRQLQAQRETNQRLEQRNAGLEAEVRDLKSGNEAVEERARFELGLTKPDEIFVHTPRKP</sequence>
<evidence type="ECO:0000255" key="1">
    <source>
        <dbReference type="HAMAP-Rule" id="MF_00599"/>
    </source>
</evidence>
<dbReference type="EMBL" id="CR555306">
    <property type="protein sequence ID" value="CAI09646.1"/>
    <property type="molecule type" value="Genomic_DNA"/>
</dbReference>
<dbReference type="RefSeq" id="WP_011239305.1">
    <property type="nucleotide sequence ID" value="NC_006513.1"/>
</dbReference>
<dbReference type="SMR" id="Q5NZ68"/>
<dbReference type="STRING" id="76114.ebD109"/>
<dbReference type="KEGG" id="eba:ebD109"/>
<dbReference type="eggNOG" id="COG2919">
    <property type="taxonomic scope" value="Bacteria"/>
</dbReference>
<dbReference type="HOGENOM" id="CLU_134863_5_0_4"/>
<dbReference type="OrthoDB" id="7061211at2"/>
<dbReference type="Proteomes" id="UP000006552">
    <property type="component" value="Chromosome"/>
</dbReference>
<dbReference type="GO" id="GO:0032153">
    <property type="term" value="C:cell division site"/>
    <property type="evidence" value="ECO:0007669"/>
    <property type="project" value="UniProtKB-UniRule"/>
</dbReference>
<dbReference type="GO" id="GO:0030428">
    <property type="term" value="C:cell septum"/>
    <property type="evidence" value="ECO:0007669"/>
    <property type="project" value="TreeGrafter"/>
</dbReference>
<dbReference type="GO" id="GO:0005886">
    <property type="term" value="C:plasma membrane"/>
    <property type="evidence" value="ECO:0007669"/>
    <property type="project" value="UniProtKB-SubCell"/>
</dbReference>
<dbReference type="GO" id="GO:0043093">
    <property type="term" value="P:FtsZ-dependent cytokinesis"/>
    <property type="evidence" value="ECO:0007669"/>
    <property type="project" value="UniProtKB-UniRule"/>
</dbReference>
<dbReference type="HAMAP" id="MF_00599">
    <property type="entry name" value="FtsB"/>
    <property type="match status" value="1"/>
</dbReference>
<dbReference type="InterPro" id="IPR023081">
    <property type="entry name" value="Cell_div_FtsB"/>
</dbReference>
<dbReference type="InterPro" id="IPR007060">
    <property type="entry name" value="FtsL/DivIC"/>
</dbReference>
<dbReference type="NCBIfam" id="NF002058">
    <property type="entry name" value="PRK00888.1"/>
    <property type="match status" value="1"/>
</dbReference>
<dbReference type="PANTHER" id="PTHR37485">
    <property type="entry name" value="CELL DIVISION PROTEIN FTSB"/>
    <property type="match status" value="1"/>
</dbReference>
<dbReference type="PANTHER" id="PTHR37485:SF1">
    <property type="entry name" value="CELL DIVISION PROTEIN FTSB"/>
    <property type="match status" value="1"/>
</dbReference>
<dbReference type="Pfam" id="PF04977">
    <property type="entry name" value="DivIC"/>
    <property type="match status" value="1"/>
</dbReference>
<comment type="function">
    <text evidence="1">Essential cell division protein. May link together the upstream cell division proteins, which are predominantly cytoplasmic, with the downstream cell division proteins, which are predominantly periplasmic.</text>
</comment>
<comment type="subunit">
    <text evidence="1">Part of a complex composed of FtsB, FtsL and FtsQ.</text>
</comment>
<comment type="subcellular location">
    <subcellularLocation>
        <location evidence="1">Cell inner membrane</location>
        <topology evidence="1">Single-pass type II membrane protein</topology>
    </subcellularLocation>
    <text evidence="1">Localizes to the division septum.</text>
</comment>
<comment type="similarity">
    <text evidence="1">Belongs to the FtsB family.</text>
</comment>
<accession>Q5NZ68</accession>
<proteinExistence type="inferred from homology"/>
<gene>
    <name evidence="1" type="primary">ftsB</name>
    <name type="ordered locus">AZOSEA35210</name>
    <name type="ORF">ebD109</name>
</gene>
<protein>
    <recommendedName>
        <fullName evidence="1">Cell division protein FtsB</fullName>
    </recommendedName>
</protein>
<name>FTSB_AROAE</name>
<organism>
    <name type="scientific">Aromatoleum aromaticum (strain DSM 19018 / LMG 30748 / EbN1)</name>
    <name type="common">Azoarcus sp. (strain EbN1)</name>
    <dbReference type="NCBI Taxonomy" id="76114"/>
    <lineage>
        <taxon>Bacteria</taxon>
        <taxon>Pseudomonadati</taxon>
        <taxon>Pseudomonadota</taxon>
        <taxon>Betaproteobacteria</taxon>
        <taxon>Rhodocyclales</taxon>
        <taxon>Rhodocyclaceae</taxon>
        <taxon>Aromatoleum</taxon>
    </lineage>
</organism>